<reference key="1">
    <citation type="journal article" date="2006" name="Planta">
        <title>Structure, expression, and functional analysis of the hexokinase gene family in rice (Oryza sativa L.).</title>
        <authorList>
            <person name="Cho J.-I."/>
            <person name="Ryoo N."/>
            <person name="Ko S."/>
            <person name="Lee S.-K."/>
            <person name="Lee J."/>
            <person name="Jung K.-H."/>
            <person name="Lee Y.-H."/>
            <person name="Bhoo S.H."/>
            <person name="Winderickx J."/>
            <person name="An G."/>
            <person name="Hahn T.-R."/>
            <person name="Jeon J.-S."/>
        </authorList>
    </citation>
    <scope>NUCLEOTIDE SEQUENCE [MRNA]</scope>
    <scope>FUNCTION</scope>
    <scope>TISSUE SPECIFICITY</scope>
    <scope>DEVELOPMENTAL STAGE</scope>
    <scope>INDUCTION</scope>
    <scope>NOMENCLATURE</scope>
    <source>
        <strain>cv. Jinmi</strain>
    </source>
</reference>
<reference key="2">
    <citation type="submission" date="2005-01" db="EMBL/GenBank/DDBJ databases">
        <title>The hexokinase gene family in rice.</title>
        <authorList>
            <person name="Wang Y.D."/>
            <person name="Cheng W."/>
            <person name="Wang X.S."/>
            <person name="Zhou X.J."/>
        </authorList>
    </citation>
    <scope>NUCLEOTIDE SEQUENCE [MRNA]</scope>
    <source>
        <strain>cv. Zhonghua 15</strain>
        <tissue>Flower</tissue>
    </source>
</reference>
<reference key="3">
    <citation type="journal article" date="2002" name="Nature">
        <title>The genome sequence and structure of rice chromosome 1.</title>
        <authorList>
            <person name="Sasaki T."/>
            <person name="Matsumoto T."/>
            <person name="Yamamoto K."/>
            <person name="Sakata K."/>
            <person name="Baba T."/>
            <person name="Katayose Y."/>
            <person name="Wu J."/>
            <person name="Niimura Y."/>
            <person name="Cheng Z."/>
            <person name="Nagamura Y."/>
            <person name="Antonio B.A."/>
            <person name="Kanamori H."/>
            <person name="Hosokawa S."/>
            <person name="Masukawa M."/>
            <person name="Arikawa K."/>
            <person name="Chiden Y."/>
            <person name="Hayashi M."/>
            <person name="Okamoto M."/>
            <person name="Ando T."/>
            <person name="Aoki H."/>
            <person name="Arita K."/>
            <person name="Hamada M."/>
            <person name="Harada C."/>
            <person name="Hijishita S."/>
            <person name="Honda M."/>
            <person name="Ichikawa Y."/>
            <person name="Idonuma A."/>
            <person name="Iijima M."/>
            <person name="Ikeda M."/>
            <person name="Ikeno M."/>
            <person name="Ito S."/>
            <person name="Ito T."/>
            <person name="Ito Y."/>
            <person name="Ito Y."/>
            <person name="Iwabuchi A."/>
            <person name="Kamiya K."/>
            <person name="Karasawa W."/>
            <person name="Katagiri S."/>
            <person name="Kikuta A."/>
            <person name="Kobayashi N."/>
            <person name="Kono I."/>
            <person name="Machita K."/>
            <person name="Maehara T."/>
            <person name="Mizuno H."/>
            <person name="Mizubayashi T."/>
            <person name="Mukai Y."/>
            <person name="Nagasaki H."/>
            <person name="Nakashima M."/>
            <person name="Nakama Y."/>
            <person name="Nakamichi Y."/>
            <person name="Nakamura M."/>
            <person name="Namiki N."/>
            <person name="Negishi M."/>
            <person name="Ohta I."/>
            <person name="Ono N."/>
            <person name="Saji S."/>
            <person name="Sakai K."/>
            <person name="Shibata M."/>
            <person name="Shimokawa T."/>
            <person name="Shomura A."/>
            <person name="Song J."/>
            <person name="Takazaki Y."/>
            <person name="Terasawa K."/>
            <person name="Tsuji K."/>
            <person name="Waki K."/>
            <person name="Yamagata H."/>
            <person name="Yamane H."/>
            <person name="Yoshiki S."/>
            <person name="Yoshihara R."/>
            <person name="Yukawa K."/>
            <person name="Zhong H."/>
            <person name="Iwama H."/>
            <person name="Endo T."/>
            <person name="Ito H."/>
            <person name="Hahn J.H."/>
            <person name="Kim H.-I."/>
            <person name="Eun M.-Y."/>
            <person name="Yano M."/>
            <person name="Jiang J."/>
            <person name="Gojobori T."/>
        </authorList>
    </citation>
    <scope>NUCLEOTIDE SEQUENCE [LARGE SCALE GENOMIC DNA]</scope>
    <source>
        <strain>cv. Nipponbare</strain>
    </source>
</reference>
<reference key="4">
    <citation type="journal article" date="2005" name="Nature">
        <title>The map-based sequence of the rice genome.</title>
        <authorList>
            <consortium name="International rice genome sequencing project (IRGSP)"/>
        </authorList>
    </citation>
    <scope>NUCLEOTIDE SEQUENCE [LARGE SCALE GENOMIC DNA]</scope>
    <source>
        <strain>cv. Nipponbare</strain>
    </source>
</reference>
<reference key="5">
    <citation type="journal article" date="2013" name="Rice">
        <title>Improvement of the Oryza sativa Nipponbare reference genome using next generation sequence and optical map data.</title>
        <authorList>
            <person name="Kawahara Y."/>
            <person name="de la Bastide M."/>
            <person name="Hamilton J.P."/>
            <person name="Kanamori H."/>
            <person name="McCombie W.R."/>
            <person name="Ouyang S."/>
            <person name="Schwartz D.C."/>
            <person name="Tanaka T."/>
            <person name="Wu J."/>
            <person name="Zhou S."/>
            <person name="Childs K.L."/>
            <person name="Davidson R.M."/>
            <person name="Lin H."/>
            <person name="Quesada-Ocampo L."/>
            <person name="Vaillancourt B."/>
            <person name="Sakai H."/>
            <person name="Lee S.S."/>
            <person name="Kim J."/>
            <person name="Numa H."/>
            <person name="Itoh T."/>
            <person name="Buell C.R."/>
            <person name="Matsumoto T."/>
        </authorList>
    </citation>
    <scope>GENOME REANNOTATION</scope>
    <source>
        <strain>cv. Nipponbare</strain>
    </source>
</reference>
<reference key="6">
    <citation type="journal article" date="2022" name="Theor. Appl. Genet.">
        <title>OsHXK3 encodes a hexokinase-like protein that positively regulates grain size in rice.</title>
        <authorList>
            <person name="Yun P."/>
            <person name="Li Y."/>
            <person name="Wu B."/>
            <person name="Zhu Y."/>
            <person name="Wang K."/>
            <person name="Li P."/>
            <person name="Gao G."/>
            <person name="Zhang Q."/>
            <person name="Li X."/>
            <person name="Li Z."/>
            <person name="He Y."/>
        </authorList>
    </citation>
    <scope>FUNCTION</scope>
    <scope>SUBCELLULAR LOCATION</scope>
    <scope>TISSUE SPECIFICITY</scope>
    <scope>DISRUPTION PHENOTYPE</scope>
</reference>
<keyword id="KW-0067">ATP-binding</keyword>
<keyword id="KW-0324">Glycolysis</keyword>
<keyword id="KW-0418">Kinase</keyword>
<keyword id="KW-0472">Membrane</keyword>
<keyword id="KW-0496">Mitochondrion</keyword>
<keyword id="KW-1000">Mitochondrion outer membrane</keyword>
<keyword id="KW-0547">Nucleotide-binding</keyword>
<keyword id="KW-1185">Reference proteome</keyword>
<keyword id="KW-0808">Transferase</keyword>
<keyword id="KW-0812">Transmembrane</keyword>
<keyword id="KW-1133">Transmembrane helix</keyword>
<protein>
    <recommendedName>
        <fullName evidence="6">Hexokinase-3</fullName>
        <ecNumber evidence="9">2.7.1.1</ecNumber>
    </recommendedName>
    <alternativeName>
        <fullName>Hexokinase-8</fullName>
    </alternativeName>
    <alternativeName>
        <fullName evidence="7">Protein SHORT AND NARROW GRAIN 1</fullName>
    </alternativeName>
</protein>
<sequence>MGRVGLGVAVGCAAVTCAIAAALVARRASARARWRRAVALLREFEEGCATPPARLRQVVDAMVVEMHAGLASDGGSKLKMLLTFVDALPSGSEEGVYYSIDLGGTNFRVLRVQVGAGSVIVNQKVEQQPIPEELTKGTTEGLFNFVALALKNFLEGEDDQDGKMALGFTFSFPVRQISVSSGSLIRWTKGFSIRDTVGRDVAQCLNEALANCGLNVRVTALVNDTVGTLALGHYYDEDTVAAVIIGSGTNACYIERTDAIIKCQGLLTNSGGMVVNMEWGNFWSSHLPRTPYDILLDDETHNRNDQGFEKMISGMYLGEIARLVFHRMAQESDVFGDAADSLSNPFILSTPFLAAIREDDSPDLSEVRRILREHLKIPDAPLKTRRLVVKVCDIVTRRAARLAAAGIVGILKKLGRDGSGAASSGRGRGQPRRTVVAIEGGLYQGYPVFREYLDEALVEILGEEVARNVTLRVTEDGSGVGAALLAAVHSSNRQQQGGPI</sequence>
<dbReference type="EC" id="2.7.1.1" evidence="9"/>
<dbReference type="EMBL" id="DQ116385">
    <property type="protein sequence ID" value="AAZ93620.1"/>
    <property type="molecule type" value="mRNA"/>
</dbReference>
<dbReference type="EMBL" id="AY884171">
    <property type="protein sequence ID" value="AAX68424.1"/>
    <property type="molecule type" value="mRNA"/>
</dbReference>
<dbReference type="EMBL" id="AP003412">
    <property type="protein sequence ID" value="BAD87613.1"/>
    <property type="status" value="ALT_SEQ"/>
    <property type="molecule type" value="Genomic_DNA"/>
</dbReference>
<dbReference type="EMBL" id="AP014957">
    <property type="status" value="NOT_ANNOTATED_CDS"/>
    <property type="molecule type" value="Genomic_DNA"/>
</dbReference>
<dbReference type="RefSeq" id="XP_015621344.1">
    <property type="nucleotide sequence ID" value="XM_015765858.1"/>
</dbReference>
<dbReference type="SMR" id="Q2KNB4"/>
<dbReference type="FunCoup" id="Q2KNB4">
    <property type="interactions" value="2665"/>
</dbReference>
<dbReference type="STRING" id="39947.Q2KNB4"/>
<dbReference type="PaxDb" id="39947-Q2KNB4"/>
<dbReference type="EnsemblPlants" id="Os01t0940100-01">
    <property type="protein sequence ID" value="Os01t0940100-01"/>
    <property type="gene ID" value="Os01g0940100"/>
</dbReference>
<dbReference type="Gramene" id="Os01t0940100-01">
    <property type="protein sequence ID" value="Os01t0940100-01"/>
    <property type="gene ID" value="Os01g0940100"/>
</dbReference>
<dbReference type="eggNOG" id="KOG1369">
    <property type="taxonomic scope" value="Eukaryota"/>
</dbReference>
<dbReference type="InParanoid" id="Q2KNB4"/>
<dbReference type="OrthoDB" id="419537at2759"/>
<dbReference type="BRENDA" id="2.7.1.1">
    <property type="organism ID" value="4460"/>
</dbReference>
<dbReference type="PlantReactome" id="R-OSA-1119570">
    <property type="pathway name" value="Cytosolic glycolysis"/>
</dbReference>
<dbReference type="PlantReactome" id="R-OSA-1119595">
    <property type="pathway name" value="Mannose degradation"/>
</dbReference>
<dbReference type="PlantReactome" id="R-OSA-1119601">
    <property type="pathway name" value="Trehalose degradation II"/>
</dbReference>
<dbReference type="PlantReactome" id="R-OSA-1119628">
    <property type="pathway name" value="GDP-mannose metabolism"/>
</dbReference>
<dbReference type="UniPathway" id="UPA00109">
    <property type="reaction ID" value="UER00180"/>
</dbReference>
<dbReference type="UniPathway" id="UPA00242"/>
<dbReference type="Proteomes" id="UP000000763">
    <property type="component" value="Chromosome 1"/>
</dbReference>
<dbReference type="Proteomes" id="UP000059680">
    <property type="component" value="Chromosome 1"/>
</dbReference>
<dbReference type="GO" id="GO:0005829">
    <property type="term" value="C:cytosol"/>
    <property type="evidence" value="ECO:0000318"/>
    <property type="project" value="GO_Central"/>
</dbReference>
<dbReference type="GO" id="GO:0005741">
    <property type="term" value="C:mitochondrial outer membrane"/>
    <property type="evidence" value="ECO:0007669"/>
    <property type="project" value="UniProtKB-SubCell"/>
</dbReference>
<dbReference type="GO" id="GO:0005739">
    <property type="term" value="C:mitochondrion"/>
    <property type="evidence" value="ECO:0000318"/>
    <property type="project" value="GO_Central"/>
</dbReference>
<dbReference type="GO" id="GO:0005524">
    <property type="term" value="F:ATP binding"/>
    <property type="evidence" value="ECO:0007669"/>
    <property type="project" value="UniProtKB-KW"/>
</dbReference>
<dbReference type="GO" id="GO:0005536">
    <property type="term" value="F:D-glucose binding"/>
    <property type="evidence" value="ECO:0007669"/>
    <property type="project" value="InterPro"/>
</dbReference>
<dbReference type="GO" id="GO:0008865">
    <property type="term" value="F:fructokinase activity"/>
    <property type="evidence" value="ECO:0007669"/>
    <property type="project" value="RHEA"/>
</dbReference>
<dbReference type="GO" id="GO:0004340">
    <property type="term" value="F:glucokinase activity"/>
    <property type="evidence" value="ECO:0007669"/>
    <property type="project" value="UniProtKB-ARBA"/>
</dbReference>
<dbReference type="GO" id="GO:0006096">
    <property type="term" value="P:glycolytic process"/>
    <property type="evidence" value="ECO:0007669"/>
    <property type="project" value="UniProtKB-UniPathway"/>
</dbReference>
<dbReference type="GO" id="GO:0019318">
    <property type="term" value="P:hexose metabolic process"/>
    <property type="evidence" value="ECO:0007669"/>
    <property type="project" value="UniProtKB-UniPathway"/>
</dbReference>
<dbReference type="GO" id="GO:0001678">
    <property type="term" value="P:intracellular glucose homeostasis"/>
    <property type="evidence" value="ECO:0007669"/>
    <property type="project" value="InterPro"/>
</dbReference>
<dbReference type="CDD" id="cd24020">
    <property type="entry name" value="ASKHA_NBD_HK_plant"/>
    <property type="match status" value="1"/>
</dbReference>
<dbReference type="FunFam" id="3.30.420.40:FF:000034">
    <property type="entry name" value="Phosphotransferase"/>
    <property type="match status" value="1"/>
</dbReference>
<dbReference type="FunFam" id="3.40.367.20:FF:000003">
    <property type="entry name" value="Phosphotransferase"/>
    <property type="match status" value="1"/>
</dbReference>
<dbReference type="Gene3D" id="3.30.420.40">
    <property type="match status" value="1"/>
</dbReference>
<dbReference type="Gene3D" id="3.40.367.20">
    <property type="match status" value="1"/>
</dbReference>
<dbReference type="InterPro" id="IPR043129">
    <property type="entry name" value="ATPase_NBD"/>
</dbReference>
<dbReference type="InterPro" id="IPR001312">
    <property type="entry name" value="Hexokinase"/>
</dbReference>
<dbReference type="InterPro" id="IPR019807">
    <property type="entry name" value="Hexokinase_BS"/>
</dbReference>
<dbReference type="InterPro" id="IPR022673">
    <property type="entry name" value="Hexokinase_C"/>
</dbReference>
<dbReference type="InterPro" id="IPR022672">
    <property type="entry name" value="Hexokinase_N"/>
</dbReference>
<dbReference type="PANTHER" id="PTHR19443">
    <property type="entry name" value="HEXOKINASE"/>
    <property type="match status" value="1"/>
</dbReference>
<dbReference type="PANTHER" id="PTHR19443:SF6">
    <property type="entry name" value="HEXOKINASE-4"/>
    <property type="match status" value="1"/>
</dbReference>
<dbReference type="Pfam" id="PF00349">
    <property type="entry name" value="Hexokinase_1"/>
    <property type="match status" value="1"/>
</dbReference>
<dbReference type="Pfam" id="PF03727">
    <property type="entry name" value="Hexokinase_2"/>
    <property type="match status" value="1"/>
</dbReference>
<dbReference type="PRINTS" id="PR00475">
    <property type="entry name" value="HEXOKINASE"/>
</dbReference>
<dbReference type="SUPFAM" id="SSF53067">
    <property type="entry name" value="Actin-like ATPase domain"/>
    <property type="match status" value="2"/>
</dbReference>
<dbReference type="PROSITE" id="PS00378">
    <property type="entry name" value="HEXOKINASE_1"/>
    <property type="match status" value="1"/>
</dbReference>
<dbReference type="PROSITE" id="PS51748">
    <property type="entry name" value="HEXOKINASE_2"/>
    <property type="match status" value="1"/>
</dbReference>
<accession>Q2KNB4</accession>
<accession>Q5JLP7</accession>
<proteinExistence type="evidence at transcript level"/>
<feature type="chain" id="PRO_0000247566" description="Hexokinase-3">
    <location>
        <begin position="1"/>
        <end position="500"/>
    </location>
</feature>
<feature type="transmembrane region" description="Helical" evidence="2">
    <location>
        <begin position="4"/>
        <end position="24"/>
    </location>
</feature>
<feature type="domain" description="Hexokinase" evidence="3">
    <location>
        <begin position="35"/>
        <end position="487"/>
    </location>
</feature>
<feature type="region of interest" description="Hexokinase small subdomain" evidence="3">
    <location>
        <begin position="90"/>
        <end position="222"/>
    </location>
</feature>
<feature type="region of interest" description="Hexokinase large subdomain" evidence="3">
    <location>
        <begin position="223"/>
        <end position="476"/>
    </location>
</feature>
<feature type="binding site" evidence="1">
    <location>
        <position position="104"/>
    </location>
    <ligand>
        <name>ADP</name>
        <dbReference type="ChEBI" id="CHEBI:456216"/>
    </ligand>
</feature>
<feature type="binding site" evidence="1">
    <location>
        <position position="105"/>
    </location>
    <ligand>
        <name>ADP</name>
        <dbReference type="ChEBI" id="CHEBI:456216"/>
    </ligand>
</feature>
<feature type="binding site" evidence="1">
    <location>
        <position position="106"/>
    </location>
    <ligand>
        <name>ADP</name>
        <dbReference type="ChEBI" id="CHEBI:456216"/>
    </ligand>
</feature>
<feature type="binding site" evidence="1">
    <location>
        <position position="188"/>
    </location>
    <ligand>
        <name>D-glucose</name>
        <dbReference type="ChEBI" id="CHEBI:4167"/>
    </ligand>
</feature>
<feature type="binding site" evidence="1">
    <location>
        <position position="189"/>
    </location>
    <ligand>
        <name>D-glucose</name>
        <dbReference type="ChEBI" id="CHEBI:4167"/>
    </ligand>
</feature>
<feature type="binding site" evidence="1">
    <location>
        <position position="223"/>
    </location>
    <ligand>
        <name>D-glucose</name>
        <dbReference type="ChEBI" id="CHEBI:4167"/>
    </ligand>
</feature>
<feature type="binding site" evidence="1">
    <location>
        <position position="224"/>
    </location>
    <ligand>
        <name>D-glucose</name>
        <dbReference type="ChEBI" id="CHEBI:4167"/>
    </ligand>
</feature>
<feature type="binding site" evidence="1">
    <location>
        <position position="247"/>
    </location>
    <ligand>
        <name>ADP</name>
        <dbReference type="ChEBI" id="CHEBI:456216"/>
    </ligand>
</feature>
<feature type="binding site" evidence="1">
    <location>
        <position position="250"/>
    </location>
    <ligand>
        <name>D-glucose</name>
        <dbReference type="ChEBI" id="CHEBI:4167"/>
    </ligand>
</feature>
<feature type="binding site" evidence="1">
    <location>
        <position position="278"/>
    </location>
    <ligand>
        <name>D-glucose</name>
        <dbReference type="ChEBI" id="CHEBI:4167"/>
    </ligand>
</feature>
<feature type="binding site" evidence="1">
    <location>
        <position position="309"/>
    </location>
    <ligand>
        <name>D-glucose</name>
        <dbReference type="ChEBI" id="CHEBI:4167"/>
    </ligand>
</feature>
<feature type="binding site" evidence="1">
    <location>
        <position position="441"/>
    </location>
    <ligand>
        <name>ADP</name>
        <dbReference type="ChEBI" id="CHEBI:456216"/>
    </ligand>
</feature>
<organism>
    <name type="scientific">Oryza sativa subsp. japonica</name>
    <name type="common">Rice</name>
    <dbReference type="NCBI Taxonomy" id="39947"/>
    <lineage>
        <taxon>Eukaryota</taxon>
        <taxon>Viridiplantae</taxon>
        <taxon>Streptophyta</taxon>
        <taxon>Embryophyta</taxon>
        <taxon>Tracheophyta</taxon>
        <taxon>Spermatophyta</taxon>
        <taxon>Magnoliopsida</taxon>
        <taxon>Liliopsida</taxon>
        <taxon>Poales</taxon>
        <taxon>Poaceae</taxon>
        <taxon>BOP clade</taxon>
        <taxon>Oryzoideae</taxon>
        <taxon>Oryzeae</taxon>
        <taxon>Oryzinae</taxon>
        <taxon>Oryza</taxon>
        <taxon>Oryza sativa</taxon>
    </lineage>
</organism>
<gene>
    <name evidence="6" type="primary">HXK3</name>
    <name type="synonym">HXK8</name>
    <name evidence="7" type="synonym">SNG1</name>
    <name type="ordered locus">Os01g0940100</name>
    <name type="ordered locus">LOC_Os01g71320</name>
    <name type="ORF">B1150F11.26-1</name>
</gene>
<comment type="function">
    <text evidence="4 5">Fructose and glucose phosphorylating enzyme (PubMed:16552590). Involved in the regulation of cell expansion in spikelet hulls, grain size, and gibberellin biosynthesis and homeostasis (PubMed:35941236).</text>
</comment>
<comment type="catalytic activity">
    <reaction evidence="9">
        <text>a D-hexose + ATP = a D-hexose 6-phosphate + ADP + H(+)</text>
        <dbReference type="Rhea" id="RHEA:22740"/>
        <dbReference type="ChEBI" id="CHEBI:4194"/>
        <dbReference type="ChEBI" id="CHEBI:15378"/>
        <dbReference type="ChEBI" id="CHEBI:30616"/>
        <dbReference type="ChEBI" id="CHEBI:229467"/>
        <dbReference type="ChEBI" id="CHEBI:456216"/>
        <dbReference type="EC" id="2.7.1.1"/>
    </reaction>
    <physiologicalReaction direction="left-to-right" evidence="9">
        <dbReference type="Rhea" id="RHEA:22741"/>
    </physiologicalReaction>
</comment>
<comment type="catalytic activity">
    <reaction evidence="9">
        <text>D-fructose + ATP = D-fructose 6-phosphate + ADP + H(+)</text>
        <dbReference type="Rhea" id="RHEA:16125"/>
        <dbReference type="ChEBI" id="CHEBI:15378"/>
        <dbReference type="ChEBI" id="CHEBI:30616"/>
        <dbReference type="ChEBI" id="CHEBI:37721"/>
        <dbReference type="ChEBI" id="CHEBI:61527"/>
        <dbReference type="ChEBI" id="CHEBI:456216"/>
        <dbReference type="EC" id="2.7.1.1"/>
    </reaction>
    <physiologicalReaction direction="left-to-right" evidence="9">
        <dbReference type="Rhea" id="RHEA:16126"/>
    </physiologicalReaction>
</comment>
<comment type="catalytic activity">
    <reaction evidence="9">
        <text>D-glucose + ATP = D-glucose 6-phosphate + ADP + H(+)</text>
        <dbReference type="Rhea" id="RHEA:17825"/>
        <dbReference type="ChEBI" id="CHEBI:4167"/>
        <dbReference type="ChEBI" id="CHEBI:15378"/>
        <dbReference type="ChEBI" id="CHEBI:30616"/>
        <dbReference type="ChEBI" id="CHEBI:61548"/>
        <dbReference type="ChEBI" id="CHEBI:456216"/>
        <dbReference type="EC" id="2.7.1.1"/>
    </reaction>
    <physiologicalReaction direction="left-to-right" evidence="9">
        <dbReference type="Rhea" id="RHEA:17826"/>
    </physiologicalReaction>
</comment>
<comment type="pathway">
    <text evidence="9">Carbohydrate metabolism; hexose metabolism.</text>
</comment>
<comment type="pathway">
    <text evidence="9">Carbohydrate degradation; glycolysis; D-glyceraldehyde 3-phosphate and glycerone phosphate from D-glucose: step 1/4.</text>
</comment>
<comment type="subcellular location">
    <subcellularLocation>
        <location evidence="5">Mitochondrion outer membrane</location>
        <topology evidence="2">Single-pass membrane protein</topology>
    </subcellularLocation>
</comment>
<comment type="tissue specificity">
    <text evidence="4 5">Expressed in roots, leaves, flowers, immature seeds and seed coat (PubMed:16552590). Expressed in young shoots, tiller buds, endosperm seven days after fertilization, and interconnecting tissues such as pulvini and nodes (PubMed:35941236).</text>
</comment>
<comment type="developmental stage">
    <text evidence="4">Expressed during flower development until 8 days after flowering.</text>
</comment>
<comment type="induction">
    <text evidence="4">Not induced by glucose or fructose treatment in leaves.</text>
</comment>
<comment type="disruption phenotype">
    <text evidence="5">Decreased grain length, grain width, and grain filling (PubMed:35941236). Delayed seed germination and retarded seedling growth (PubMed:35941236).</text>
</comment>
<comment type="similarity">
    <text evidence="3 8">Belongs to the hexokinase family.</text>
</comment>
<comment type="sequence caution" evidence="8">
    <conflict type="erroneous gene model prediction">
        <sequence resource="EMBL-CDS" id="BAD87613"/>
    </conflict>
</comment>
<evidence type="ECO:0000250" key="1">
    <source>
        <dbReference type="UniProtKB" id="Q8LQ68"/>
    </source>
</evidence>
<evidence type="ECO:0000255" key="2"/>
<evidence type="ECO:0000255" key="3">
    <source>
        <dbReference type="PROSITE-ProRule" id="PRU01084"/>
    </source>
</evidence>
<evidence type="ECO:0000269" key="4">
    <source>
    </source>
</evidence>
<evidence type="ECO:0000269" key="5">
    <source>
    </source>
</evidence>
<evidence type="ECO:0000303" key="6">
    <source>
    </source>
</evidence>
<evidence type="ECO:0000303" key="7">
    <source>
    </source>
</evidence>
<evidence type="ECO:0000305" key="8"/>
<evidence type="ECO:0000305" key="9">
    <source>
    </source>
</evidence>
<name>HXK3_ORYSJ</name>